<protein>
    <recommendedName>
        <fullName>Putative ESX-1 scaffolding and assembly protein SaeB</fullName>
    </recommendedName>
</protein>
<accession>L8FL04</accession>
<accession>A0A2U9PH40</accession>
<dbReference type="EMBL" id="CP027541">
    <property type="protein sequence ID" value="AWT51037.1"/>
    <property type="molecule type" value="Genomic_DNA"/>
</dbReference>
<dbReference type="RefSeq" id="WP_003891373.1">
    <property type="nucleotide sequence ID" value="NZ_CP027541.1"/>
</dbReference>
<dbReference type="PATRIC" id="fig|1214915.3.peg.46"/>
<dbReference type="HOGENOM" id="CLU_345074_0_0_11"/>
<dbReference type="Proteomes" id="UP000011200">
    <property type="component" value="Chromosome"/>
</dbReference>
<dbReference type="InterPro" id="IPR045401">
    <property type="entry name" value="GAP1-M"/>
</dbReference>
<dbReference type="InterPro" id="IPR045402">
    <property type="entry name" value="GAP1-N2"/>
</dbReference>
<dbReference type="Pfam" id="PF20014">
    <property type="entry name" value="GAP1-M"/>
    <property type="match status" value="1"/>
</dbReference>
<dbReference type="Pfam" id="PF20013">
    <property type="entry name" value="GAP1-N2"/>
    <property type="match status" value="1"/>
</dbReference>
<sequence length="822" mass="86625">MTSRFGQLTYTSFDAVGTVGGWQVKETTDALTSEETQLMLAGVRTVFRTVEPMPDYPTPEQLEAAPRRLAYSRVGETYAALWHTVPAGADSTGRPGNVFAHVLLDRTPDVAPRHRAIQWWRSPHWLCPYGATSVSRAALAEPGPEPGGVVTKDSVVAFALDTTTWRLATLFGLLDAVAAALDGGAPVVLGVESPDNAAQWIGLLSFLMSPGTAAQLSFSTFDRADQLNLHGGQVLSAVPLEDLSAVPAGMAAISEAETLSLGELGGEPHRTAGGYAIDVTPWSAMAQVVLLDPGSARRLLDDIDAVAEQVRDSGLHPAWPMAMAVAGRAEFADAEEEAHEVIAAHSPPGVAVGSAAARTISGVLSAVVGTTTADAWRAVQELPTGPGAVFADTTYLCRAVADDAWLSNSGPIPLGPRMFHGKPIPPPLRTAIGDALNPARGPERLLQVADLLVRAGVEDPRIRTTLVEDVVPRLRDAEARERVGADARLTLGAVLLNDGDANGTAIDDGLLDWLADTAPLPPPDELAQATPWDRTWTTAALRGVRAWRRGTGGAGRDAGALLWWLRMAGSADFEQTATASAWNPEDLLLAIGADPLPGAAAVRTLVAAADSPALNRLAAKVIDENGDSLAVACAAVRTIEPTVWLQQRYVETHQHAYVPLWDEVLSVVDPADVHPDFSTRLLAFALLGLFTGHPYPRACSGFAASDRLGGEAIERLMPLVGEGHLAPHAVVAISLLRAAAPPDPSHPDVTLDELAGHLAEQVATGMVGDDNDVEGVVAVMAQLSGDSAEPALRGYRKMVTKLMARRRDSPSLTARLRGGMQA</sequence>
<organism>
    <name type="scientific">Mycolicibacterium smegmatis (strain MKD8)</name>
    <name type="common">Mycobacterium smegmatis</name>
    <dbReference type="NCBI Taxonomy" id="1214915"/>
    <lineage>
        <taxon>Bacteria</taxon>
        <taxon>Bacillati</taxon>
        <taxon>Actinomycetota</taxon>
        <taxon>Actinomycetes</taxon>
        <taxon>Mycobacteriales</taxon>
        <taxon>Mycobacteriaceae</taxon>
        <taxon>Mycolicibacterium</taxon>
    </lineage>
</organism>
<name>SAEB_MYCSE</name>
<feature type="chain" id="PRO_0000438354" description="Putative ESX-1 scaffolding and assembly protein SaeB">
    <location>
        <begin position="1"/>
        <end position="822"/>
    </location>
</feature>
<proteinExistence type="inferred from homology"/>
<reference key="1">
    <citation type="journal article" date="2013" name="Genome Announc.">
        <title>Draft genome sequence of MKD8, a conjugal recipient Mycobacterium smegmatis strain.</title>
        <authorList>
            <person name="Gray T.A."/>
            <person name="Palumbo M.J."/>
            <person name="Derbyshire K.M."/>
        </authorList>
    </citation>
    <scope>NUCLEOTIDE SEQUENCE [LARGE SCALE GENOMIC DNA]</scope>
    <source>
        <strain>MKD8</strain>
    </source>
</reference>
<reference key="2">
    <citation type="submission" date="2018-03" db="EMBL/GenBank/DDBJ databases">
        <authorList>
            <person name="Derbyshire K."/>
            <person name="Gray T.A."/>
            <person name="Champion M."/>
        </authorList>
    </citation>
    <scope>NUCLEOTIDE SEQUENCE [LARGE SCALE GENOMIC DNA]</scope>
    <source>
        <strain>MKD8</strain>
    </source>
</reference>
<reference key="3">
    <citation type="journal article" date="2008" name="Mol. Microbiol.">
        <title>The specialized secretory apparatus ESX-1 is essential for DNA transfer in Mycobacterium smegmatis.</title>
        <authorList>
            <person name="Coros A."/>
            <person name="Callahan B."/>
            <person name="Battaglioli E."/>
            <person name="Derbyshire K.M."/>
        </authorList>
    </citation>
    <scope>FUNCTION</scope>
    <scope>DISRUPTION PHENOTYPE</scope>
    <source>
        <strain>ATCC 700084 / mc(2)155</strain>
        <strain>MKD8</strain>
    </source>
</reference>
<comment type="function">
    <text evidence="1 2">May be involved in assembly of the ESX-1 / type VII specialized secretion system (T7SS), which exports several proteins including EsxA and EsxB (By similarity). Involved in DNA conjugation in recipient (MKD8) but not donor (mc(2)155) strain (PubMed:18554329).</text>
</comment>
<comment type="disruption phenotype">
    <text evidence="2">Loss of DNA conjugation when disrupted in recipient strain, no effect when disrupted in donor strain (PubMed:18554329). The recipient strain secretes reduced amounts of EsxB (PubMed:18554329).</text>
</comment>
<comment type="miscellaneous">
    <text evidence="4">DNA conjugation in M.smegmatis is unidirectional with distinct donor and recipient strains; mc(2)155 is a donor strain while MKD8 is a recipient strain. Mutations in a donor strain that alter DNA transfer do not always alter DNA transfer in a recipient strain.</text>
</comment>
<evidence type="ECO:0000250" key="1">
    <source>
        <dbReference type="UniProtKB" id="A0QNH5"/>
    </source>
</evidence>
<evidence type="ECO:0000269" key="2">
    <source>
    </source>
</evidence>
<evidence type="ECO:0000303" key="3">
    <source>
    </source>
</evidence>
<evidence type="ECO:0000305" key="4">
    <source>
    </source>
</evidence>
<evidence type="ECO:0000312" key="5">
    <source>
        <dbReference type="EMBL" id="AWT51037.1"/>
    </source>
</evidence>
<gene>
    <name type="primary">saeB</name>
    <name evidence="3" type="ORF">0044</name>
    <name evidence="5" type="ORF">D806_000430</name>
    <name type="ORF">D806_0046</name>
</gene>